<protein>
    <recommendedName>
        <fullName>Transcriptional regulator MraZ</fullName>
    </recommendedName>
</protein>
<dbReference type="EMBL" id="BX293980">
    <property type="protein sequence ID" value="CAE77215.1"/>
    <property type="molecule type" value="Genomic_DNA"/>
</dbReference>
<dbReference type="RefSeq" id="NP_975573.1">
    <property type="nucleotide sequence ID" value="NC_005364.2"/>
</dbReference>
<dbReference type="RefSeq" id="WP_011166770.1">
    <property type="nucleotide sequence ID" value="NC_005364.2"/>
</dbReference>
<dbReference type="SMR" id="Q6MT21"/>
<dbReference type="STRING" id="272632.MSC_0592"/>
<dbReference type="KEGG" id="mmy:MSC_0592"/>
<dbReference type="PATRIC" id="fig|272632.4.peg.637"/>
<dbReference type="eggNOG" id="COG2001">
    <property type="taxonomic scope" value="Bacteria"/>
</dbReference>
<dbReference type="HOGENOM" id="CLU_107907_0_5_14"/>
<dbReference type="Proteomes" id="UP000001016">
    <property type="component" value="Chromosome"/>
</dbReference>
<dbReference type="GO" id="GO:0005737">
    <property type="term" value="C:cytoplasm"/>
    <property type="evidence" value="ECO:0007669"/>
    <property type="project" value="UniProtKB-UniRule"/>
</dbReference>
<dbReference type="GO" id="GO:0009295">
    <property type="term" value="C:nucleoid"/>
    <property type="evidence" value="ECO:0007669"/>
    <property type="project" value="UniProtKB-SubCell"/>
</dbReference>
<dbReference type="GO" id="GO:0003700">
    <property type="term" value="F:DNA-binding transcription factor activity"/>
    <property type="evidence" value="ECO:0007669"/>
    <property type="project" value="UniProtKB-UniRule"/>
</dbReference>
<dbReference type="GO" id="GO:0000976">
    <property type="term" value="F:transcription cis-regulatory region binding"/>
    <property type="evidence" value="ECO:0007669"/>
    <property type="project" value="TreeGrafter"/>
</dbReference>
<dbReference type="GO" id="GO:2000143">
    <property type="term" value="P:negative regulation of DNA-templated transcription initiation"/>
    <property type="evidence" value="ECO:0007669"/>
    <property type="project" value="TreeGrafter"/>
</dbReference>
<dbReference type="CDD" id="cd16321">
    <property type="entry name" value="MraZ_C"/>
    <property type="match status" value="1"/>
</dbReference>
<dbReference type="CDD" id="cd16320">
    <property type="entry name" value="MraZ_N"/>
    <property type="match status" value="1"/>
</dbReference>
<dbReference type="Gene3D" id="3.40.1550.20">
    <property type="entry name" value="Transcriptional regulator MraZ domain"/>
    <property type="match status" value="1"/>
</dbReference>
<dbReference type="HAMAP" id="MF_01008">
    <property type="entry name" value="MraZ"/>
    <property type="match status" value="1"/>
</dbReference>
<dbReference type="InterPro" id="IPR003444">
    <property type="entry name" value="MraZ"/>
</dbReference>
<dbReference type="InterPro" id="IPR035644">
    <property type="entry name" value="MraZ_C"/>
</dbReference>
<dbReference type="InterPro" id="IPR020603">
    <property type="entry name" value="MraZ_dom"/>
</dbReference>
<dbReference type="InterPro" id="IPR035642">
    <property type="entry name" value="MraZ_N"/>
</dbReference>
<dbReference type="InterPro" id="IPR038619">
    <property type="entry name" value="MraZ_sf"/>
</dbReference>
<dbReference type="InterPro" id="IPR007159">
    <property type="entry name" value="SpoVT-AbrB_dom"/>
</dbReference>
<dbReference type="InterPro" id="IPR037914">
    <property type="entry name" value="SpoVT-AbrB_sf"/>
</dbReference>
<dbReference type="NCBIfam" id="TIGR00242">
    <property type="entry name" value="division/cell wall cluster transcriptional repressor MraZ"/>
    <property type="match status" value="1"/>
</dbReference>
<dbReference type="PANTHER" id="PTHR34701">
    <property type="entry name" value="TRANSCRIPTIONAL REGULATOR MRAZ"/>
    <property type="match status" value="1"/>
</dbReference>
<dbReference type="PANTHER" id="PTHR34701:SF1">
    <property type="entry name" value="TRANSCRIPTIONAL REGULATOR MRAZ"/>
    <property type="match status" value="1"/>
</dbReference>
<dbReference type="Pfam" id="PF02381">
    <property type="entry name" value="MraZ"/>
    <property type="match status" value="2"/>
</dbReference>
<dbReference type="SUPFAM" id="SSF89447">
    <property type="entry name" value="AbrB/MazE/MraZ-like"/>
    <property type="match status" value="1"/>
</dbReference>
<dbReference type="PROSITE" id="PS51740">
    <property type="entry name" value="SPOVT_ABRB"/>
    <property type="match status" value="2"/>
</dbReference>
<reference key="1">
    <citation type="journal article" date="2004" name="Genome Res.">
        <title>The genome sequence of Mycoplasma mycoides subsp. mycoides SC type strain PG1T, the causative agent of contagious bovine pleuropneumonia (CBPP).</title>
        <authorList>
            <person name="Westberg J."/>
            <person name="Persson A."/>
            <person name="Holmberg A."/>
            <person name="Goesmann A."/>
            <person name="Lundeberg J."/>
            <person name="Johansson K.-E."/>
            <person name="Pettersson B."/>
            <person name="Uhlen M."/>
        </authorList>
    </citation>
    <scope>NUCLEOTIDE SEQUENCE [LARGE SCALE GENOMIC DNA]</scope>
    <source>
        <strain>CCUG 32753 / NCTC 10114 / PG1</strain>
    </source>
</reference>
<name>MRAZ_MYCMS</name>
<sequence length="133" mass="15733">MLFGTYEHCMDAKQRLTLPAKLRNKLSNPIYLTKGYDADLEIWSKDDFLLKIKEILNQQNDQKDIRNIERIIWSNTVEIDIDNLGRIKIPYNLIQNLNIGKDVFILGLGNRLEIWSKNKYNQHKNQFIKNLNS</sequence>
<feature type="chain" id="PRO_0000108506" description="Transcriptional regulator MraZ">
    <location>
        <begin position="1"/>
        <end position="133"/>
    </location>
</feature>
<feature type="domain" description="SpoVT-AbrB 1" evidence="2">
    <location>
        <begin position="5"/>
        <end position="47"/>
    </location>
</feature>
<feature type="domain" description="SpoVT-AbrB 2" evidence="2">
    <location>
        <begin position="76"/>
        <end position="119"/>
    </location>
</feature>
<accession>Q6MT21</accession>
<gene>
    <name evidence="1" type="primary">mraZ</name>
    <name type="ordered locus">MSC_0592</name>
</gene>
<organism>
    <name type="scientific">Mycoplasma mycoides subsp. mycoides SC (strain CCUG 32753 / NCTC 10114 / PG1)</name>
    <dbReference type="NCBI Taxonomy" id="272632"/>
    <lineage>
        <taxon>Bacteria</taxon>
        <taxon>Bacillati</taxon>
        <taxon>Mycoplasmatota</taxon>
        <taxon>Mollicutes</taxon>
        <taxon>Mycoplasmataceae</taxon>
        <taxon>Mycoplasma</taxon>
    </lineage>
</organism>
<keyword id="KW-0963">Cytoplasm</keyword>
<keyword id="KW-0238">DNA-binding</keyword>
<keyword id="KW-1185">Reference proteome</keyword>
<keyword id="KW-0677">Repeat</keyword>
<keyword id="KW-0804">Transcription</keyword>
<keyword id="KW-0805">Transcription regulation</keyword>
<proteinExistence type="inferred from homology"/>
<comment type="subunit">
    <text evidence="1">Forms oligomers.</text>
</comment>
<comment type="subcellular location">
    <subcellularLocation>
        <location evidence="1">Cytoplasm</location>
        <location evidence="1">Nucleoid</location>
    </subcellularLocation>
</comment>
<comment type="similarity">
    <text evidence="1">Belongs to the MraZ family.</text>
</comment>
<evidence type="ECO:0000255" key="1">
    <source>
        <dbReference type="HAMAP-Rule" id="MF_01008"/>
    </source>
</evidence>
<evidence type="ECO:0000255" key="2">
    <source>
        <dbReference type="PROSITE-ProRule" id="PRU01076"/>
    </source>
</evidence>